<name>UPP_THEP3</name>
<proteinExistence type="inferred from homology"/>
<keyword id="KW-0021">Allosteric enzyme</keyword>
<keyword id="KW-0328">Glycosyltransferase</keyword>
<keyword id="KW-0342">GTP-binding</keyword>
<keyword id="KW-0460">Magnesium</keyword>
<keyword id="KW-0547">Nucleotide-binding</keyword>
<keyword id="KW-1185">Reference proteome</keyword>
<keyword id="KW-0808">Transferase</keyword>
<sequence length="210" mass="22995">MYKNVFVIDHPLIQHKISLIRDENTGSKEFRELVEEIAMLMAYEVTRDLPLEEIEVKTPVAVAKTKVIAGKKLGIIPILRAGLGMVDGMLKLIPAAKVGHIGIYRDPETLKPVEYYCKLPSDIAERDLIVVDPMLATGGSACAAIHFLKERGAQNIKLVNLIAAPEGIEAVHRDHPEVPIYVASIDQGLNEHGYIVPGLGDAGDRLFGTK</sequence>
<gene>
    <name evidence="1" type="primary">upp</name>
    <name type="ordered locus">Teth39_2104</name>
</gene>
<organism>
    <name type="scientific">Thermoanaerobacter pseudethanolicus (strain ATCC 33223 / 39E)</name>
    <name type="common">Clostridium thermohydrosulfuricum</name>
    <dbReference type="NCBI Taxonomy" id="340099"/>
    <lineage>
        <taxon>Bacteria</taxon>
        <taxon>Bacillati</taxon>
        <taxon>Bacillota</taxon>
        <taxon>Clostridia</taxon>
        <taxon>Thermoanaerobacterales</taxon>
        <taxon>Thermoanaerobacteraceae</taxon>
        <taxon>Thermoanaerobacter</taxon>
    </lineage>
</organism>
<dbReference type="EC" id="2.4.2.9" evidence="1"/>
<dbReference type="EMBL" id="CP000924">
    <property type="protein sequence ID" value="ABY95727.1"/>
    <property type="molecule type" value="Genomic_DNA"/>
</dbReference>
<dbReference type="RefSeq" id="WP_003867307.1">
    <property type="nucleotide sequence ID" value="NC_010321.1"/>
</dbReference>
<dbReference type="SMR" id="B0K7G1"/>
<dbReference type="STRING" id="340099.Teth39_2104"/>
<dbReference type="KEGG" id="tpd:Teth39_2104"/>
<dbReference type="eggNOG" id="COG0035">
    <property type="taxonomic scope" value="Bacteria"/>
</dbReference>
<dbReference type="HOGENOM" id="CLU_067096_2_2_9"/>
<dbReference type="UniPathway" id="UPA00574">
    <property type="reaction ID" value="UER00636"/>
</dbReference>
<dbReference type="Proteomes" id="UP000002156">
    <property type="component" value="Chromosome"/>
</dbReference>
<dbReference type="GO" id="GO:0005525">
    <property type="term" value="F:GTP binding"/>
    <property type="evidence" value="ECO:0007669"/>
    <property type="project" value="UniProtKB-KW"/>
</dbReference>
<dbReference type="GO" id="GO:0000287">
    <property type="term" value="F:magnesium ion binding"/>
    <property type="evidence" value="ECO:0007669"/>
    <property type="project" value="UniProtKB-UniRule"/>
</dbReference>
<dbReference type="GO" id="GO:0004845">
    <property type="term" value="F:uracil phosphoribosyltransferase activity"/>
    <property type="evidence" value="ECO:0007669"/>
    <property type="project" value="UniProtKB-UniRule"/>
</dbReference>
<dbReference type="GO" id="GO:0044206">
    <property type="term" value="P:UMP salvage"/>
    <property type="evidence" value="ECO:0007669"/>
    <property type="project" value="UniProtKB-UniRule"/>
</dbReference>
<dbReference type="GO" id="GO:0006223">
    <property type="term" value="P:uracil salvage"/>
    <property type="evidence" value="ECO:0007669"/>
    <property type="project" value="InterPro"/>
</dbReference>
<dbReference type="CDD" id="cd06223">
    <property type="entry name" value="PRTases_typeI"/>
    <property type="match status" value="1"/>
</dbReference>
<dbReference type="FunFam" id="3.40.50.2020:FF:000003">
    <property type="entry name" value="Uracil phosphoribosyltransferase"/>
    <property type="match status" value="1"/>
</dbReference>
<dbReference type="Gene3D" id="3.40.50.2020">
    <property type="match status" value="1"/>
</dbReference>
<dbReference type="HAMAP" id="MF_01218_B">
    <property type="entry name" value="Upp_B"/>
    <property type="match status" value="1"/>
</dbReference>
<dbReference type="InterPro" id="IPR000836">
    <property type="entry name" value="PRibTrfase_dom"/>
</dbReference>
<dbReference type="InterPro" id="IPR029057">
    <property type="entry name" value="PRTase-like"/>
</dbReference>
<dbReference type="InterPro" id="IPR034332">
    <property type="entry name" value="Upp_B"/>
</dbReference>
<dbReference type="InterPro" id="IPR050054">
    <property type="entry name" value="UPRTase/APRTase"/>
</dbReference>
<dbReference type="InterPro" id="IPR005765">
    <property type="entry name" value="Ura_phspho_trans"/>
</dbReference>
<dbReference type="NCBIfam" id="NF001097">
    <property type="entry name" value="PRK00129.1"/>
    <property type="match status" value="1"/>
</dbReference>
<dbReference type="NCBIfam" id="TIGR01091">
    <property type="entry name" value="upp"/>
    <property type="match status" value="1"/>
</dbReference>
<dbReference type="PANTHER" id="PTHR32315">
    <property type="entry name" value="ADENINE PHOSPHORIBOSYLTRANSFERASE"/>
    <property type="match status" value="1"/>
</dbReference>
<dbReference type="PANTHER" id="PTHR32315:SF4">
    <property type="entry name" value="URACIL PHOSPHORIBOSYLTRANSFERASE, CHLOROPLASTIC"/>
    <property type="match status" value="1"/>
</dbReference>
<dbReference type="Pfam" id="PF14681">
    <property type="entry name" value="UPRTase"/>
    <property type="match status" value="1"/>
</dbReference>
<dbReference type="SUPFAM" id="SSF53271">
    <property type="entry name" value="PRTase-like"/>
    <property type="match status" value="1"/>
</dbReference>
<evidence type="ECO:0000255" key="1">
    <source>
        <dbReference type="HAMAP-Rule" id="MF_01218"/>
    </source>
</evidence>
<feature type="chain" id="PRO_1000139172" description="Uracil phosphoribosyltransferase">
    <location>
        <begin position="1"/>
        <end position="210"/>
    </location>
</feature>
<feature type="binding site" evidence="1">
    <location>
        <position position="80"/>
    </location>
    <ligand>
        <name>5-phospho-alpha-D-ribose 1-diphosphate</name>
        <dbReference type="ChEBI" id="CHEBI:58017"/>
    </ligand>
</feature>
<feature type="binding site" evidence="1">
    <location>
        <position position="105"/>
    </location>
    <ligand>
        <name>5-phospho-alpha-D-ribose 1-diphosphate</name>
        <dbReference type="ChEBI" id="CHEBI:58017"/>
    </ligand>
</feature>
<feature type="binding site" evidence="1">
    <location>
        <begin position="132"/>
        <end position="140"/>
    </location>
    <ligand>
        <name>5-phospho-alpha-D-ribose 1-diphosphate</name>
        <dbReference type="ChEBI" id="CHEBI:58017"/>
    </ligand>
</feature>
<feature type="binding site" evidence="1">
    <location>
        <position position="195"/>
    </location>
    <ligand>
        <name>uracil</name>
        <dbReference type="ChEBI" id="CHEBI:17568"/>
    </ligand>
</feature>
<feature type="binding site" evidence="1">
    <location>
        <begin position="200"/>
        <end position="202"/>
    </location>
    <ligand>
        <name>uracil</name>
        <dbReference type="ChEBI" id="CHEBI:17568"/>
    </ligand>
</feature>
<feature type="binding site" evidence="1">
    <location>
        <position position="201"/>
    </location>
    <ligand>
        <name>5-phospho-alpha-D-ribose 1-diphosphate</name>
        <dbReference type="ChEBI" id="CHEBI:58017"/>
    </ligand>
</feature>
<reference key="1">
    <citation type="submission" date="2008-01" db="EMBL/GenBank/DDBJ databases">
        <title>Complete sequence of Thermoanaerobacter pseudethanolicus 39E.</title>
        <authorList>
            <person name="Copeland A."/>
            <person name="Lucas S."/>
            <person name="Lapidus A."/>
            <person name="Barry K."/>
            <person name="Glavina del Rio T."/>
            <person name="Dalin E."/>
            <person name="Tice H."/>
            <person name="Pitluck S."/>
            <person name="Bruce D."/>
            <person name="Goodwin L."/>
            <person name="Saunders E."/>
            <person name="Brettin T."/>
            <person name="Detter J.C."/>
            <person name="Han C."/>
            <person name="Schmutz J."/>
            <person name="Larimer F."/>
            <person name="Land M."/>
            <person name="Hauser L."/>
            <person name="Kyrpides N."/>
            <person name="Lykidis A."/>
            <person name="Hemme C."/>
            <person name="Fields M.W."/>
            <person name="He Z."/>
            <person name="Zhou J."/>
            <person name="Richardson P."/>
        </authorList>
    </citation>
    <scope>NUCLEOTIDE SEQUENCE [LARGE SCALE GENOMIC DNA]</scope>
    <source>
        <strain>ATCC 33223 / DSM 2355 / 39E</strain>
    </source>
</reference>
<protein>
    <recommendedName>
        <fullName evidence="1">Uracil phosphoribosyltransferase</fullName>
        <ecNumber evidence="1">2.4.2.9</ecNumber>
    </recommendedName>
    <alternativeName>
        <fullName evidence="1">UMP pyrophosphorylase</fullName>
    </alternativeName>
    <alternativeName>
        <fullName evidence="1">UPRTase</fullName>
    </alternativeName>
</protein>
<comment type="function">
    <text evidence="1">Catalyzes the conversion of uracil and 5-phospho-alpha-D-ribose 1-diphosphate (PRPP) to UMP and diphosphate.</text>
</comment>
<comment type="catalytic activity">
    <reaction evidence="1">
        <text>UMP + diphosphate = 5-phospho-alpha-D-ribose 1-diphosphate + uracil</text>
        <dbReference type="Rhea" id="RHEA:13017"/>
        <dbReference type="ChEBI" id="CHEBI:17568"/>
        <dbReference type="ChEBI" id="CHEBI:33019"/>
        <dbReference type="ChEBI" id="CHEBI:57865"/>
        <dbReference type="ChEBI" id="CHEBI:58017"/>
        <dbReference type="EC" id="2.4.2.9"/>
    </reaction>
</comment>
<comment type="cofactor">
    <cofactor evidence="1">
        <name>Mg(2+)</name>
        <dbReference type="ChEBI" id="CHEBI:18420"/>
    </cofactor>
    <text evidence="1">Binds 1 Mg(2+) ion per subunit. The magnesium is bound as Mg-PRPP.</text>
</comment>
<comment type="activity regulation">
    <text evidence="1">Allosterically activated by GTP.</text>
</comment>
<comment type="pathway">
    <text evidence="1">Pyrimidine metabolism; UMP biosynthesis via salvage pathway; UMP from uracil: step 1/1.</text>
</comment>
<comment type="similarity">
    <text evidence="1">Belongs to the UPRTase family.</text>
</comment>
<accession>B0K7G1</accession>